<reference key="1">
    <citation type="journal article" date="2007" name="Nat. Biotechnol.">
        <title>Complete genome sequence of the myxobacterium Sorangium cellulosum.</title>
        <authorList>
            <person name="Schneiker S."/>
            <person name="Perlova O."/>
            <person name="Kaiser O."/>
            <person name="Gerth K."/>
            <person name="Alici A."/>
            <person name="Altmeyer M.O."/>
            <person name="Bartels D."/>
            <person name="Bekel T."/>
            <person name="Beyer S."/>
            <person name="Bode E."/>
            <person name="Bode H.B."/>
            <person name="Bolten C.J."/>
            <person name="Choudhuri J.V."/>
            <person name="Doss S."/>
            <person name="Elnakady Y.A."/>
            <person name="Frank B."/>
            <person name="Gaigalat L."/>
            <person name="Goesmann A."/>
            <person name="Groeger C."/>
            <person name="Gross F."/>
            <person name="Jelsbak L."/>
            <person name="Jelsbak L."/>
            <person name="Kalinowski J."/>
            <person name="Kegler C."/>
            <person name="Knauber T."/>
            <person name="Konietzny S."/>
            <person name="Kopp M."/>
            <person name="Krause L."/>
            <person name="Krug D."/>
            <person name="Linke B."/>
            <person name="Mahmud T."/>
            <person name="Martinez-Arias R."/>
            <person name="McHardy A.C."/>
            <person name="Merai M."/>
            <person name="Meyer F."/>
            <person name="Mormann S."/>
            <person name="Munoz-Dorado J."/>
            <person name="Perez J."/>
            <person name="Pradella S."/>
            <person name="Rachid S."/>
            <person name="Raddatz G."/>
            <person name="Rosenau F."/>
            <person name="Rueckert C."/>
            <person name="Sasse F."/>
            <person name="Scharfe M."/>
            <person name="Schuster S.C."/>
            <person name="Suen G."/>
            <person name="Treuner-Lange A."/>
            <person name="Velicer G.J."/>
            <person name="Vorholter F.-J."/>
            <person name="Weissman K.J."/>
            <person name="Welch R.D."/>
            <person name="Wenzel S.C."/>
            <person name="Whitworth D.E."/>
            <person name="Wilhelm S."/>
            <person name="Wittmann C."/>
            <person name="Bloecker H."/>
            <person name="Puehler A."/>
            <person name="Mueller R."/>
        </authorList>
    </citation>
    <scope>NUCLEOTIDE SEQUENCE [LARGE SCALE GENOMIC DNA]</scope>
    <source>
        <strain>So ce56</strain>
    </source>
</reference>
<comment type="function">
    <text evidence="1">Catalyzes the NADPH-dependent reduction of L-glutamate 5-phosphate into L-glutamate 5-semialdehyde and phosphate. The product spontaneously undergoes cyclization to form 1-pyrroline-5-carboxylate.</text>
</comment>
<comment type="catalytic activity">
    <reaction evidence="1">
        <text>L-glutamate 5-semialdehyde + phosphate + NADP(+) = L-glutamyl 5-phosphate + NADPH + H(+)</text>
        <dbReference type="Rhea" id="RHEA:19541"/>
        <dbReference type="ChEBI" id="CHEBI:15378"/>
        <dbReference type="ChEBI" id="CHEBI:43474"/>
        <dbReference type="ChEBI" id="CHEBI:57783"/>
        <dbReference type="ChEBI" id="CHEBI:58066"/>
        <dbReference type="ChEBI" id="CHEBI:58274"/>
        <dbReference type="ChEBI" id="CHEBI:58349"/>
        <dbReference type="EC" id="1.2.1.41"/>
    </reaction>
</comment>
<comment type="pathway">
    <text evidence="1">Amino-acid biosynthesis; L-proline biosynthesis; L-glutamate 5-semialdehyde from L-glutamate: step 2/2.</text>
</comment>
<comment type="subcellular location">
    <subcellularLocation>
        <location evidence="1">Cytoplasm</location>
    </subcellularLocation>
</comment>
<comment type="similarity">
    <text evidence="1">Belongs to the gamma-glutamyl phosphate reductase family.</text>
</comment>
<name>PROA_SORC5</name>
<protein>
    <recommendedName>
        <fullName evidence="1">Gamma-glutamyl phosphate reductase</fullName>
        <shortName evidence="1">GPR</shortName>
        <ecNumber evidence="1">1.2.1.41</ecNumber>
    </recommendedName>
    <alternativeName>
        <fullName evidence="1">Glutamate-5-semialdehyde dehydrogenase</fullName>
    </alternativeName>
    <alternativeName>
        <fullName evidence="1">Glutamyl-gamma-semialdehyde dehydrogenase</fullName>
        <shortName evidence="1">GSA dehydrogenase</shortName>
    </alternativeName>
</protein>
<organism>
    <name type="scientific">Sorangium cellulosum (strain So ce56)</name>
    <name type="common">Polyangium cellulosum (strain So ce56)</name>
    <dbReference type="NCBI Taxonomy" id="448385"/>
    <lineage>
        <taxon>Bacteria</taxon>
        <taxon>Pseudomonadati</taxon>
        <taxon>Myxococcota</taxon>
        <taxon>Polyangia</taxon>
        <taxon>Polyangiales</taxon>
        <taxon>Polyangiaceae</taxon>
        <taxon>Sorangium</taxon>
    </lineage>
</organism>
<sequence length="426" mass="45048">MEQSNIDLEGALRALCQRARTAARALAPLDRAQKDRALRAIAERLRAEAGEGKRSAVLAANAEDVAAARAAGVSEALVDRLVLDEARLAAIAGAVLEIAAASDPVGQVVGMERRPNGLLVGQVRVPLGVIAMIYESRPNVTVDAAVLCLKSGNAAILRGGKEAARSNAALGELISDALRSVGLPADAVQMVPSLDREATRILLGLTGMIDLAIPRGGEGLIRFVAENARVPVIQHYKGVNHLYADAGCDLEMACRLVENGKLQRPGVCNALECLLVHEDVAAPLLGRVAALSERGLELRGDAATCALVPSARKAAEDDYGREFLAPILAVRVVRSLDEAIEHIGRYGSMHTEVICTPRYDHAQRFLREVDASCVLVNASSRFNDGGELGLGAEIGISTTKLHAYGPMGLASLTTLKWIAYGEGQTR</sequence>
<gene>
    <name evidence="1" type="primary">proA</name>
    <name type="ordered locus">sce3676</name>
</gene>
<dbReference type="EC" id="1.2.1.41" evidence="1"/>
<dbReference type="EMBL" id="AM746676">
    <property type="protein sequence ID" value="CAN93836.1"/>
    <property type="molecule type" value="Genomic_DNA"/>
</dbReference>
<dbReference type="RefSeq" id="WP_012236306.1">
    <property type="nucleotide sequence ID" value="NC_010162.1"/>
</dbReference>
<dbReference type="SMR" id="A9GVS8"/>
<dbReference type="STRING" id="448385.sce3676"/>
<dbReference type="KEGG" id="scl:sce3676"/>
<dbReference type="eggNOG" id="COG0014">
    <property type="taxonomic scope" value="Bacteria"/>
</dbReference>
<dbReference type="HOGENOM" id="CLU_030231_0_0_7"/>
<dbReference type="OrthoDB" id="9809970at2"/>
<dbReference type="BioCyc" id="SCEL448385:SCE_RS18830-MONOMER"/>
<dbReference type="UniPathway" id="UPA00098">
    <property type="reaction ID" value="UER00360"/>
</dbReference>
<dbReference type="Proteomes" id="UP000002139">
    <property type="component" value="Chromosome"/>
</dbReference>
<dbReference type="GO" id="GO:0005737">
    <property type="term" value="C:cytoplasm"/>
    <property type="evidence" value="ECO:0007669"/>
    <property type="project" value="UniProtKB-SubCell"/>
</dbReference>
<dbReference type="GO" id="GO:0004350">
    <property type="term" value="F:glutamate-5-semialdehyde dehydrogenase activity"/>
    <property type="evidence" value="ECO:0007669"/>
    <property type="project" value="UniProtKB-UniRule"/>
</dbReference>
<dbReference type="GO" id="GO:0050661">
    <property type="term" value="F:NADP binding"/>
    <property type="evidence" value="ECO:0007669"/>
    <property type="project" value="InterPro"/>
</dbReference>
<dbReference type="GO" id="GO:0055129">
    <property type="term" value="P:L-proline biosynthetic process"/>
    <property type="evidence" value="ECO:0007669"/>
    <property type="project" value="UniProtKB-UniRule"/>
</dbReference>
<dbReference type="CDD" id="cd07079">
    <property type="entry name" value="ALDH_F18-19_ProA-GPR"/>
    <property type="match status" value="1"/>
</dbReference>
<dbReference type="Gene3D" id="3.40.605.10">
    <property type="entry name" value="Aldehyde Dehydrogenase, Chain A, domain 1"/>
    <property type="match status" value="1"/>
</dbReference>
<dbReference type="Gene3D" id="3.40.309.10">
    <property type="entry name" value="Aldehyde Dehydrogenase, Chain A, domain 2"/>
    <property type="match status" value="1"/>
</dbReference>
<dbReference type="HAMAP" id="MF_00412">
    <property type="entry name" value="ProA"/>
    <property type="match status" value="1"/>
</dbReference>
<dbReference type="InterPro" id="IPR016161">
    <property type="entry name" value="Ald_DH/histidinol_DH"/>
</dbReference>
<dbReference type="InterPro" id="IPR016163">
    <property type="entry name" value="Ald_DH_C"/>
</dbReference>
<dbReference type="InterPro" id="IPR016162">
    <property type="entry name" value="Ald_DH_N"/>
</dbReference>
<dbReference type="InterPro" id="IPR015590">
    <property type="entry name" value="Aldehyde_DH_dom"/>
</dbReference>
<dbReference type="InterPro" id="IPR020593">
    <property type="entry name" value="G-glutamylP_reductase_CS"/>
</dbReference>
<dbReference type="InterPro" id="IPR012134">
    <property type="entry name" value="Glu-5-SA_DH"/>
</dbReference>
<dbReference type="InterPro" id="IPR000965">
    <property type="entry name" value="GPR_dom"/>
</dbReference>
<dbReference type="NCBIfam" id="NF001221">
    <property type="entry name" value="PRK00197.1"/>
    <property type="match status" value="1"/>
</dbReference>
<dbReference type="NCBIfam" id="TIGR00407">
    <property type="entry name" value="proA"/>
    <property type="match status" value="1"/>
</dbReference>
<dbReference type="PANTHER" id="PTHR11063:SF8">
    <property type="entry name" value="DELTA-1-PYRROLINE-5-CARBOXYLATE SYNTHASE"/>
    <property type="match status" value="1"/>
</dbReference>
<dbReference type="PANTHER" id="PTHR11063">
    <property type="entry name" value="GLUTAMATE SEMIALDEHYDE DEHYDROGENASE"/>
    <property type="match status" value="1"/>
</dbReference>
<dbReference type="Pfam" id="PF00171">
    <property type="entry name" value="Aldedh"/>
    <property type="match status" value="1"/>
</dbReference>
<dbReference type="PIRSF" id="PIRSF000151">
    <property type="entry name" value="GPR"/>
    <property type="match status" value="1"/>
</dbReference>
<dbReference type="SUPFAM" id="SSF53720">
    <property type="entry name" value="ALDH-like"/>
    <property type="match status" value="1"/>
</dbReference>
<dbReference type="PROSITE" id="PS01223">
    <property type="entry name" value="PROA"/>
    <property type="match status" value="1"/>
</dbReference>
<feature type="chain" id="PRO_0000340920" description="Gamma-glutamyl phosphate reductase">
    <location>
        <begin position="1"/>
        <end position="426"/>
    </location>
</feature>
<evidence type="ECO:0000255" key="1">
    <source>
        <dbReference type="HAMAP-Rule" id="MF_00412"/>
    </source>
</evidence>
<proteinExistence type="inferred from homology"/>
<accession>A9GVS8</accession>
<keyword id="KW-0028">Amino-acid biosynthesis</keyword>
<keyword id="KW-0963">Cytoplasm</keyword>
<keyword id="KW-0521">NADP</keyword>
<keyword id="KW-0560">Oxidoreductase</keyword>
<keyword id="KW-0641">Proline biosynthesis</keyword>
<keyword id="KW-1185">Reference proteome</keyword>